<evidence type="ECO:0000255" key="1">
    <source>
        <dbReference type="HAMAP-Rule" id="MF_00300"/>
    </source>
</evidence>
<organism>
    <name type="scientific">Xanthomonas campestris pv. campestris (strain B100)</name>
    <dbReference type="NCBI Taxonomy" id="509169"/>
    <lineage>
        <taxon>Bacteria</taxon>
        <taxon>Pseudomonadati</taxon>
        <taxon>Pseudomonadota</taxon>
        <taxon>Gammaproteobacteria</taxon>
        <taxon>Lysobacterales</taxon>
        <taxon>Lysobacteraceae</taxon>
        <taxon>Xanthomonas</taxon>
    </lineage>
</organism>
<feature type="chain" id="PRO_1000115415" description="Chorismate synthase">
    <location>
        <begin position="1"/>
        <end position="367"/>
    </location>
</feature>
<feature type="binding site" evidence="1">
    <location>
        <position position="48"/>
    </location>
    <ligand>
        <name>NADP(+)</name>
        <dbReference type="ChEBI" id="CHEBI:58349"/>
    </ligand>
</feature>
<feature type="binding site" evidence="1">
    <location>
        <position position="54"/>
    </location>
    <ligand>
        <name>NADP(+)</name>
        <dbReference type="ChEBI" id="CHEBI:58349"/>
    </ligand>
</feature>
<feature type="binding site" evidence="1">
    <location>
        <begin position="125"/>
        <end position="127"/>
    </location>
    <ligand>
        <name>FMN</name>
        <dbReference type="ChEBI" id="CHEBI:58210"/>
    </ligand>
</feature>
<feature type="binding site" evidence="1">
    <location>
        <begin position="238"/>
        <end position="239"/>
    </location>
    <ligand>
        <name>FMN</name>
        <dbReference type="ChEBI" id="CHEBI:58210"/>
    </ligand>
</feature>
<feature type="binding site" evidence="1">
    <location>
        <position position="278"/>
    </location>
    <ligand>
        <name>FMN</name>
        <dbReference type="ChEBI" id="CHEBI:58210"/>
    </ligand>
</feature>
<feature type="binding site" evidence="1">
    <location>
        <begin position="293"/>
        <end position="297"/>
    </location>
    <ligand>
        <name>FMN</name>
        <dbReference type="ChEBI" id="CHEBI:58210"/>
    </ligand>
</feature>
<feature type="binding site" evidence="1">
    <location>
        <position position="319"/>
    </location>
    <ligand>
        <name>FMN</name>
        <dbReference type="ChEBI" id="CHEBI:58210"/>
    </ligand>
</feature>
<protein>
    <recommendedName>
        <fullName evidence="1">Chorismate synthase</fullName>
        <shortName evidence="1">CS</shortName>
        <ecNumber evidence="1">4.2.3.5</ecNumber>
    </recommendedName>
    <alternativeName>
        <fullName evidence="1">5-enolpyruvylshikimate-3-phosphate phospholyase</fullName>
    </alternativeName>
</protein>
<dbReference type="EC" id="4.2.3.5" evidence="1"/>
<dbReference type="EMBL" id="AM920689">
    <property type="protein sequence ID" value="CAP50961.1"/>
    <property type="molecule type" value="Genomic_DNA"/>
</dbReference>
<dbReference type="SMR" id="B0RR76"/>
<dbReference type="KEGG" id="xca:xcc-b100_1611"/>
<dbReference type="HOGENOM" id="CLU_034547_0_2_6"/>
<dbReference type="UniPathway" id="UPA00053">
    <property type="reaction ID" value="UER00090"/>
</dbReference>
<dbReference type="Proteomes" id="UP000001188">
    <property type="component" value="Chromosome"/>
</dbReference>
<dbReference type="GO" id="GO:0005829">
    <property type="term" value="C:cytosol"/>
    <property type="evidence" value="ECO:0007669"/>
    <property type="project" value="TreeGrafter"/>
</dbReference>
<dbReference type="GO" id="GO:0004107">
    <property type="term" value="F:chorismate synthase activity"/>
    <property type="evidence" value="ECO:0007669"/>
    <property type="project" value="UniProtKB-UniRule"/>
</dbReference>
<dbReference type="GO" id="GO:0010181">
    <property type="term" value="F:FMN binding"/>
    <property type="evidence" value="ECO:0007669"/>
    <property type="project" value="TreeGrafter"/>
</dbReference>
<dbReference type="GO" id="GO:0008652">
    <property type="term" value="P:amino acid biosynthetic process"/>
    <property type="evidence" value="ECO:0007669"/>
    <property type="project" value="UniProtKB-KW"/>
</dbReference>
<dbReference type="GO" id="GO:0009073">
    <property type="term" value="P:aromatic amino acid family biosynthetic process"/>
    <property type="evidence" value="ECO:0007669"/>
    <property type="project" value="UniProtKB-KW"/>
</dbReference>
<dbReference type="GO" id="GO:0009423">
    <property type="term" value="P:chorismate biosynthetic process"/>
    <property type="evidence" value="ECO:0007669"/>
    <property type="project" value="UniProtKB-UniRule"/>
</dbReference>
<dbReference type="CDD" id="cd07304">
    <property type="entry name" value="Chorismate_synthase"/>
    <property type="match status" value="1"/>
</dbReference>
<dbReference type="FunFam" id="3.60.150.10:FF:000001">
    <property type="entry name" value="Chorismate synthase"/>
    <property type="match status" value="1"/>
</dbReference>
<dbReference type="Gene3D" id="3.60.150.10">
    <property type="entry name" value="Chorismate synthase AroC"/>
    <property type="match status" value="1"/>
</dbReference>
<dbReference type="HAMAP" id="MF_00300">
    <property type="entry name" value="Chorismate_synth"/>
    <property type="match status" value="1"/>
</dbReference>
<dbReference type="InterPro" id="IPR000453">
    <property type="entry name" value="Chorismate_synth"/>
</dbReference>
<dbReference type="InterPro" id="IPR035904">
    <property type="entry name" value="Chorismate_synth_AroC_sf"/>
</dbReference>
<dbReference type="InterPro" id="IPR020541">
    <property type="entry name" value="Chorismate_synthase_CS"/>
</dbReference>
<dbReference type="NCBIfam" id="TIGR00033">
    <property type="entry name" value="aroC"/>
    <property type="match status" value="1"/>
</dbReference>
<dbReference type="NCBIfam" id="NF003793">
    <property type="entry name" value="PRK05382.1"/>
    <property type="match status" value="1"/>
</dbReference>
<dbReference type="PANTHER" id="PTHR21085">
    <property type="entry name" value="CHORISMATE SYNTHASE"/>
    <property type="match status" value="1"/>
</dbReference>
<dbReference type="PANTHER" id="PTHR21085:SF0">
    <property type="entry name" value="CHORISMATE SYNTHASE"/>
    <property type="match status" value="1"/>
</dbReference>
<dbReference type="Pfam" id="PF01264">
    <property type="entry name" value="Chorismate_synt"/>
    <property type="match status" value="1"/>
</dbReference>
<dbReference type="PIRSF" id="PIRSF001456">
    <property type="entry name" value="Chorismate_synth"/>
    <property type="match status" value="1"/>
</dbReference>
<dbReference type="SUPFAM" id="SSF103263">
    <property type="entry name" value="Chorismate synthase, AroC"/>
    <property type="match status" value="1"/>
</dbReference>
<dbReference type="PROSITE" id="PS00787">
    <property type="entry name" value="CHORISMATE_SYNTHASE_1"/>
    <property type="match status" value="1"/>
</dbReference>
<dbReference type="PROSITE" id="PS00788">
    <property type="entry name" value="CHORISMATE_SYNTHASE_2"/>
    <property type="match status" value="1"/>
</dbReference>
<dbReference type="PROSITE" id="PS00789">
    <property type="entry name" value="CHORISMATE_SYNTHASE_3"/>
    <property type="match status" value="1"/>
</dbReference>
<reference key="1">
    <citation type="journal article" date="2008" name="J. Biotechnol.">
        <title>The genome of Xanthomonas campestris pv. campestris B100 and its use for the reconstruction of metabolic pathways involved in xanthan biosynthesis.</title>
        <authorList>
            <person name="Vorhoelter F.-J."/>
            <person name="Schneiker S."/>
            <person name="Goesmann A."/>
            <person name="Krause L."/>
            <person name="Bekel T."/>
            <person name="Kaiser O."/>
            <person name="Linke B."/>
            <person name="Patschkowski T."/>
            <person name="Rueckert C."/>
            <person name="Schmid J."/>
            <person name="Sidhu V.K."/>
            <person name="Sieber V."/>
            <person name="Tauch A."/>
            <person name="Watt S.A."/>
            <person name="Weisshaar B."/>
            <person name="Becker A."/>
            <person name="Niehaus K."/>
            <person name="Puehler A."/>
        </authorList>
    </citation>
    <scope>NUCLEOTIDE SEQUENCE [LARGE SCALE GENOMIC DNA]</scope>
    <source>
        <strain>B100</strain>
    </source>
</reference>
<proteinExistence type="inferred from homology"/>
<sequence>MGSNSFGRLFTVTTFGESHGPAIGCIIDGCPPGLEIAPEEFTHDLQRRATGKSRHTSARREADEIEILSGVYEGRTTGTPIGLLIRNTDQRSKDYTNIAQQFRPGHADYTYWQKYGIRDPRGGGRSSARETTMRVAAGVIAKKWLKQRYGVLVRGFLSQLGEIRPTGFDWDAVEDNPFFWPHAAQVPELETYMDALRKSGDSVGARVDVVAGGVPPGWGEPIYGKLDSELAAALMSINAVKGVEIGDGFASAAQKGTEHRDLITPEGFLSNHAGGILGGISTGQAVTASMVLKPTSSLRLPGATVDADGAVVDVITTGRHDPCVGIRATPIAEAMMALVLMDQALRHRAQCGDVGEVSPLIPGQADV</sequence>
<gene>
    <name evidence="1" type="primary">aroC</name>
    <name type="ordered locus">xcc-b100_1611</name>
</gene>
<comment type="function">
    <text evidence="1">Catalyzes the anti-1,4-elimination of the C-3 phosphate and the C-6 proR hydrogen from 5-enolpyruvylshikimate-3-phosphate (EPSP) to yield chorismate, which is the branch point compound that serves as the starting substrate for the three terminal pathways of aromatic amino acid biosynthesis. This reaction introduces a second double bond into the aromatic ring system.</text>
</comment>
<comment type="catalytic activity">
    <reaction evidence="1">
        <text>5-O-(1-carboxyvinyl)-3-phosphoshikimate = chorismate + phosphate</text>
        <dbReference type="Rhea" id="RHEA:21020"/>
        <dbReference type="ChEBI" id="CHEBI:29748"/>
        <dbReference type="ChEBI" id="CHEBI:43474"/>
        <dbReference type="ChEBI" id="CHEBI:57701"/>
        <dbReference type="EC" id="4.2.3.5"/>
    </reaction>
</comment>
<comment type="cofactor">
    <cofactor evidence="1">
        <name>FMNH2</name>
        <dbReference type="ChEBI" id="CHEBI:57618"/>
    </cofactor>
    <text evidence="1">Reduced FMN (FMNH(2)).</text>
</comment>
<comment type="pathway">
    <text evidence="1">Metabolic intermediate biosynthesis; chorismate biosynthesis; chorismate from D-erythrose 4-phosphate and phosphoenolpyruvate: step 7/7.</text>
</comment>
<comment type="subunit">
    <text evidence="1">Homotetramer.</text>
</comment>
<comment type="similarity">
    <text evidence="1">Belongs to the chorismate synthase family.</text>
</comment>
<accession>B0RR76</accession>
<keyword id="KW-0028">Amino-acid biosynthesis</keyword>
<keyword id="KW-0057">Aromatic amino acid biosynthesis</keyword>
<keyword id="KW-0274">FAD</keyword>
<keyword id="KW-0285">Flavoprotein</keyword>
<keyword id="KW-0288">FMN</keyword>
<keyword id="KW-0456">Lyase</keyword>
<keyword id="KW-0521">NADP</keyword>
<name>AROC_XANCB</name>